<gene>
    <name evidence="1" type="primary">prmA</name>
    <name type="ordered locus">Aflv_0837</name>
</gene>
<name>PRMA_ANOFW</name>
<sequence length="312" mass="34740">MKWSEISIHTTHEAVEAISNILHEAGAGGVVIEDPFELTKERETTYGEIYQLNPDDYPEEGVIIKAYLPVNSFLGETVEEIKQAINNLMLYNIDIGRNKITISEVNEEEWATAWKKYYNPVKISERFTIVPTWETYEPVSSDELIIELDPGMAFGTGTHPTTVMCIQALEKTVKKGDTVVDVGTGSGILSIAAAMLGAKRVHALDLDPVAVESAKLNVKLNKVHDVVTVSQNNLLDRMDEQADVIVANILAEIILRFVDDAYRLLRSDGVFITSGIIQTKKQEVKEGLLRAGFTIEETLTMEDWVAFIAKKQ</sequence>
<reference key="1">
    <citation type="journal article" date="2008" name="Genome Biol.">
        <title>Encapsulated in silica: genome, proteome and physiology of the thermophilic bacterium Anoxybacillus flavithermus WK1.</title>
        <authorList>
            <person name="Saw J.H."/>
            <person name="Mountain B.W."/>
            <person name="Feng L."/>
            <person name="Omelchenko M.V."/>
            <person name="Hou S."/>
            <person name="Saito J.A."/>
            <person name="Stott M.B."/>
            <person name="Li D."/>
            <person name="Zhao G."/>
            <person name="Wu J."/>
            <person name="Galperin M.Y."/>
            <person name="Koonin E.V."/>
            <person name="Makarova K.S."/>
            <person name="Wolf Y.I."/>
            <person name="Rigden D.J."/>
            <person name="Dunfield P.F."/>
            <person name="Wang L."/>
            <person name="Alam M."/>
        </authorList>
    </citation>
    <scope>NUCLEOTIDE SEQUENCE [LARGE SCALE GENOMIC DNA]</scope>
    <source>
        <strain>DSM 21510 / WK1</strain>
    </source>
</reference>
<proteinExistence type="inferred from homology"/>
<accession>B7GKD0</accession>
<dbReference type="EC" id="2.1.1.-" evidence="1"/>
<dbReference type="EMBL" id="CP000922">
    <property type="protein sequence ID" value="ACJ33215.1"/>
    <property type="molecule type" value="Genomic_DNA"/>
</dbReference>
<dbReference type="RefSeq" id="WP_012574505.1">
    <property type="nucleotide sequence ID" value="NC_011567.1"/>
</dbReference>
<dbReference type="SMR" id="B7GKD0"/>
<dbReference type="STRING" id="491915.Aflv_0837"/>
<dbReference type="GeneID" id="7037094"/>
<dbReference type="KEGG" id="afl:Aflv_0837"/>
<dbReference type="PATRIC" id="fig|491915.6.peg.857"/>
<dbReference type="eggNOG" id="COG2264">
    <property type="taxonomic scope" value="Bacteria"/>
</dbReference>
<dbReference type="HOGENOM" id="CLU_049382_0_1_9"/>
<dbReference type="Proteomes" id="UP000000742">
    <property type="component" value="Chromosome"/>
</dbReference>
<dbReference type="GO" id="GO:0005737">
    <property type="term" value="C:cytoplasm"/>
    <property type="evidence" value="ECO:0007669"/>
    <property type="project" value="UniProtKB-SubCell"/>
</dbReference>
<dbReference type="GO" id="GO:0016279">
    <property type="term" value="F:protein-lysine N-methyltransferase activity"/>
    <property type="evidence" value="ECO:0007669"/>
    <property type="project" value="RHEA"/>
</dbReference>
<dbReference type="GO" id="GO:0032259">
    <property type="term" value="P:methylation"/>
    <property type="evidence" value="ECO:0007669"/>
    <property type="project" value="UniProtKB-KW"/>
</dbReference>
<dbReference type="CDD" id="cd02440">
    <property type="entry name" value="AdoMet_MTases"/>
    <property type="match status" value="1"/>
</dbReference>
<dbReference type="Gene3D" id="3.40.50.150">
    <property type="entry name" value="Vaccinia Virus protein VP39"/>
    <property type="match status" value="1"/>
</dbReference>
<dbReference type="HAMAP" id="MF_00735">
    <property type="entry name" value="Methyltr_PrmA"/>
    <property type="match status" value="1"/>
</dbReference>
<dbReference type="InterPro" id="IPR050078">
    <property type="entry name" value="Ribosomal_L11_MeTrfase_PrmA"/>
</dbReference>
<dbReference type="InterPro" id="IPR004498">
    <property type="entry name" value="Ribosomal_PrmA_MeTrfase"/>
</dbReference>
<dbReference type="InterPro" id="IPR029063">
    <property type="entry name" value="SAM-dependent_MTases_sf"/>
</dbReference>
<dbReference type="NCBIfam" id="TIGR00406">
    <property type="entry name" value="prmA"/>
    <property type="match status" value="1"/>
</dbReference>
<dbReference type="PANTHER" id="PTHR43648">
    <property type="entry name" value="ELECTRON TRANSFER FLAVOPROTEIN BETA SUBUNIT LYSINE METHYLTRANSFERASE"/>
    <property type="match status" value="1"/>
</dbReference>
<dbReference type="PANTHER" id="PTHR43648:SF1">
    <property type="entry name" value="ELECTRON TRANSFER FLAVOPROTEIN BETA SUBUNIT LYSINE METHYLTRANSFERASE"/>
    <property type="match status" value="1"/>
</dbReference>
<dbReference type="Pfam" id="PF06325">
    <property type="entry name" value="PrmA"/>
    <property type="match status" value="1"/>
</dbReference>
<dbReference type="PIRSF" id="PIRSF000401">
    <property type="entry name" value="RPL11_MTase"/>
    <property type="match status" value="1"/>
</dbReference>
<dbReference type="SUPFAM" id="SSF53335">
    <property type="entry name" value="S-adenosyl-L-methionine-dependent methyltransferases"/>
    <property type="match status" value="1"/>
</dbReference>
<comment type="function">
    <text evidence="1">Methylates ribosomal protein L11.</text>
</comment>
<comment type="catalytic activity">
    <reaction evidence="1">
        <text>L-lysyl-[protein] + 3 S-adenosyl-L-methionine = N(6),N(6),N(6)-trimethyl-L-lysyl-[protein] + 3 S-adenosyl-L-homocysteine + 3 H(+)</text>
        <dbReference type="Rhea" id="RHEA:54192"/>
        <dbReference type="Rhea" id="RHEA-COMP:9752"/>
        <dbReference type="Rhea" id="RHEA-COMP:13826"/>
        <dbReference type="ChEBI" id="CHEBI:15378"/>
        <dbReference type="ChEBI" id="CHEBI:29969"/>
        <dbReference type="ChEBI" id="CHEBI:57856"/>
        <dbReference type="ChEBI" id="CHEBI:59789"/>
        <dbReference type="ChEBI" id="CHEBI:61961"/>
    </reaction>
</comment>
<comment type="subcellular location">
    <subcellularLocation>
        <location evidence="1">Cytoplasm</location>
    </subcellularLocation>
</comment>
<comment type="similarity">
    <text evidence="1">Belongs to the methyltransferase superfamily. PrmA family.</text>
</comment>
<feature type="chain" id="PRO_1000192576" description="Ribosomal protein L11 methyltransferase">
    <location>
        <begin position="1"/>
        <end position="312"/>
    </location>
</feature>
<feature type="binding site" evidence="1">
    <location>
        <position position="162"/>
    </location>
    <ligand>
        <name>S-adenosyl-L-methionine</name>
        <dbReference type="ChEBI" id="CHEBI:59789"/>
    </ligand>
</feature>
<feature type="binding site" evidence="1">
    <location>
        <position position="183"/>
    </location>
    <ligand>
        <name>S-adenosyl-L-methionine</name>
        <dbReference type="ChEBI" id="CHEBI:59789"/>
    </ligand>
</feature>
<feature type="binding site" evidence="1">
    <location>
        <position position="205"/>
    </location>
    <ligand>
        <name>S-adenosyl-L-methionine</name>
        <dbReference type="ChEBI" id="CHEBI:59789"/>
    </ligand>
</feature>
<feature type="binding site" evidence="1">
    <location>
        <position position="248"/>
    </location>
    <ligand>
        <name>S-adenosyl-L-methionine</name>
        <dbReference type="ChEBI" id="CHEBI:59789"/>
    </ligand>
</feature>
<protein>
    <recommendedName>
        <fullName evidence="1">Ribosomal protein L11 methyltransferase</fullName>
        <shortName evidence="1">L11 Mtase</shortName>
        <ecNumber evidence="1">2.1.1.-</ecNumber>
    </recommendedName>
</protein>
<organism>
    <name type="scientific">Anoxybacillus flavithermus (strain DSM 21510 / WK1)</name>
    <dbReference type="NCBI Taxonomy" id="491915"/>
    <lineage>
        <taxon>Bacteria</taxon>
        <taxon>Bacillati</taxon>
        <taxon>Bacillota</taxon>
        <taxon>Bacilli</taxon>
        <taxon>Bacillales</taxon>
        <taxon>Anoxybacillaceae</taxon>
        <taxon>Anoxybacillus</taxon>
    </lineage>
</organism>
<keyword id="KW-0963">Cytoplasm</keyword>
<keyword id="KW-0489">Methyltransferase</keyword>
<keyword id="KW-0949">S-adenosyl-L-methionine</keyword>
<keyword id="KW-0808">Transferase</keyword>
<evidence type="ECO:0000255" key="1">
    <source>
        <dbReference type="HAMAP-Rule" id="MF_00735"/>
    </source>
</evidence>